<protein>
    <recommendedName>
        <fullName evidence="1">Histidine decarboxylase</fullName>
        <shortName evidence="1">HDC</shortName>
        <ecNumber evidence="1">4.1.1.22</ecNumber>
    </recommendedName>
</protein>
<organism>
    <name type="scientific">Acinetobacter baumannii (strain AYE)</name>
    <dbReference type="NCBI Taxonomy" id="509173"/>
    <lineage>
        <taxon>Bacteria</taxon>
        <taxon>Pseudomonadati</taxon>
        <taxon>Pseudomonadota</taxon>
        <taxon>Gammaproteobacteria</taxon>
        <taxon>Moraxellales</taxon>
        <taxon>Moraxellaceae</taxon>
        <taxon>Acinetobacter</taxon>
        <taxon>Acinetobacter calcoaceticus/baumannii complex</taxon>
    </lineage>
</organism>
<comment type="catalytic activity">
    <reaction evidence="1">
        <text>L-histidine + H(+) = histamine + CO2</text>
        <dbReference type="Rhea" id="RHEA:20840"/>
        <dbReference type="ChEBI" id="CHEBI:15378"/>
        <dbReference type="ChEBI" id="CHEBI:16526"/>
        <dbReference type="ChEBI" id="CHEBI:57595"/>
        <dbReference type="ChEBI" id="CHEBI:58432"/>
        <dbReference type="EC" id="4.1.1.22"/>
    </reaction>
</comment>
<comment type="cofactor">
    <cofactor evidence="1">
        <name>pyridoxal 5'-phosphate</name>
        <dbReference type="ChEBI" id="CHEBI:597326"/>
    </cofactor>
</comment>
<comment type="subunit">
    <text evidence="1">Homotetramer.</text>
</comment>
<comment type="similarity">
    <text evidence="1">Belongs to the group II decarboxylase family.</text>
</comment>
<evidence type="ECO:0000255" key="1">
    <source>
        <dbReference type="HAMAP-Rule" id="MF_00609"/>
    </source>
</evidence>
<sequence length="383" mass="43737">MILSPADQERIETFWNYCLKHQYFNIGYPESADFDYSALFRFFKFSINNCGDWKDYSNYALNSFDFEKDVMAYFAEIFQIPFEESWGYVTNGGTEGNMFGCYLARELFSDSTLYYSKDTHYSVGKIAKLLQMKSCVIESLDNGEIDYDDLIHKIKTNKESHPIIFANIGTTMTGAIDDIEMIQERLAQIGIMRRDYYIHADAALSGMILPFVDHPQAFSFAHGIDSICVSGHKMIGSPIPCGIVVAKRQNVERISVDVDYISTRDQTISGSRNGHTVLLMWAAIRSQTNLQRRQRIQHCLKMAQYAVDRFQAVGIPAWRNPNSITVVFPCPSEHIWKKHYLATSGNMAHLITTAHHRDTRQIDSLIDDVIFDLQGASKRTVGF</sequence>
<proteinExistence type="inferred from homology"/>
<accession>B0VBU8</accession>
<reference key="1">
    <citation type="journal article" date="2008" name="PLoS ONE">
        <title>Comparative analysis of Acinetobacters: three genomes for three lifestyles.</title>
        <authorList>
            <person name="Vallenet D."/>
            <person name="Nordmann P."/>
            <person name="Barbe V."/>
            <person name="Poirel L."/>
            <person name="Mangenot S."/>
            <person name="Bataille E."/>
            <person name="Dossat C."/>
            <person name="Gas S."/>
            <person name="Kreimeyer A."/>
            <person name="Lenoble P."/>
            <person name="Oztas S."/>
            <person name="Poulain J."/>
            <person name="Segurens B."/>
            <person name="Robert C."/>
            <person name="Abergel C."/>
            <person name="Claverie J.-M."/>
            <person name="Raoult D."/>
            <person name="Medigue C."/>
            <person name="Weissenbach J."/>
            <person name="Cruveiller S."/>
        </authorList>
    </citation>
    <scope>NUCLEOTIDE SEQUENCE [LARGE SCALE GENOMIC DNA]</scope>
    <source>
        <strain>AYE</strain>
    </source>
</reference>
<dbReference type="EC" id="4.1.1.22" evidence="1"/>
<dbReference type="EMBL" id="CU459141">
    <property type="protein sequence ID" value="CAM86027.1"/>
    <property type="molecule type" value="Genomic_DNA"/>
</dbReference>
<dbReference type="SMR" id="B0VBU8"/>
<dbReference type="EnsemblBacteria" id="CAM86027">
    <property type="protein sequence ID" value="CAM86027"/>
    <property type="gene ID" value="ABAYE1098"/>
</dbReference>
<dbReference type="KEGG" id="aby:ABAYE1098"/>
<dbReference type="HOGENOM" id="CLU_028929_0_2_6"/>
<dbReference type="GO" id="GO:0004398">
    <property type="term" value="F:histidine decarboxylase activity"/>
    <property type="evidence" value="ECO:0007669"/>
    <property type="project" value="UniProtKB-UniRule"/>
</dbReference>
<dbReference type="GO" id="GO:0030170">
    <property type="term" value="F:pyridoxal phosphate binding"/>
    <property type="evidence" value="ECO:0007669"/>
    <property type="project" value="InterPro"/>
</dbReference>
<dbReference type="GO" id="GO:0019752">
    <property type="term" value="P:carboxylic acid metabolic process"/>
    <property type="evidence" value="ECO:0007669"/>
    <property type="project" value="InterPro"/>
</dbReference>
<dbReference type="Gene3D" id="3.40.640.10">
    <property type="entry name" value="Type I PLP-dependent aspartate aminotransferase-like (Major domain)"/>
    <property type="match status" value="1"/>
</dbReference>
<dbReference type="HAMAP" id="MF_00609">
    <property type="entry name" value="Pyridoxal_decarbox"/>
    <property type="match status" value="1"/>
</dbReference>
<dbReference type="InterPro" id="IPR051151">
    <property type="entry name" value="Group_II_Decarboxylase"/>
</dbReference>
<dbReference type="InterPro" id="IPR023523">
    <property type="entry name" value="Hist_deCOase_bac"/>
</dbReference>
<dbReference type="InterPro" id="IPR002129">
    <property type="entry name" value="PyrdxlP-dep_de-COase"/>
</dbReference>
<dbReference type="InterPro" id="IPR015424">
    <property type="entry name" value="PyrdxlP-dep_Trfase"/>
</dbReference>
<dbReference type="InterPro" id="IPR015421">
    <property type="entry name" value="PyrdxlP-dep_Trfase_major"/>
</dbReference>
<dbReference type="InterPro" id="IPR021115">
    <property type="entry name" value="Pyridoxal-P_BS"/>
</dbReference>
<dbReference type="NCBIfam" id="NF002748">
    <property type="entry name" value="PRK02769.1"/>
    <property type="match status" value="1"/>
</dbReference>
<dbReference type="PANTHER" id="PTHR46101">
    <property type="match status" value="1"/>
</dbReference>
<dbReference type="PANTHER" id="PTHR46101:SF2">
    <property type="entry name" value="SERINE DECARBOXYLASE"/>
    <property type="match status" value="1"/>
</dbReference>
<dbReference type="Pfam" id="PF00282">
    <property type="entry name" value="Pyridoxal_deC"/>
    <property type="match status" value="1"/>
</dbReference>
<dbReference type="SUPFAM" id="SSF53383">
    <property type="entry name" value="PLP-dependent transferases"/>
    <property type="match status" value="1"/>
</dbReference>
<dbReference type="PROSITE" id="PS00392">
    <property type="entry name" value="DDC_GAD_HDC_YDC"/>
    <property type="match status" value="1"/>
</dbReference>
<name>DCHS_ACIBY</name>
<gene>
    <name evidence="1" type="primary">hdc</name>
    <name type="ordered locus">ABAYE1098</name>
</gene>
<feature type="chain" id="PRO_1000130348" description="Histidine decarboxylase">
    <location>
        <begin position="1"/>
        <end position="383"/>
    </location>
</feature>
<feature type="binding site" evidence="1">
    <location>
        <position position="120"/>
    </location>
    <ligand>
        <name>substrate</name>
    </ligand>
</feature>
<feature type="modified residue" description="N6-(pyridoxal phosphate)lysine" evidence="1">
    <location>
        <position position="233"/>
    </location>
</feature>
<keyword id="KW-0210">Decarboxylase</keyword>
<keyword id="KW-0456">Lyase</keyword>
<keyword id="KW-0663">Pyridoxal phosphate</keyword>